<reference key="1">
    <citation type="journal article" date="2008" name="Proc. Natl. Acad. Sci. U.S.A.">
        <title>A korarchaeal genome reveals new insights into the evolution of the Archaea.</title>
        <authorList>
            <person name="Elkins J.G."/>
            <person name="Podar M."/>
            <person name="Graham D.E."/>
            <person name="Makarova K.S."/>
            <person name="Wolf Y."/>
            <person name="Randau L."/>
            <person name="Hedlund B.P."/>
            <person name="Brochier-Armanet C."/>
            <person name="Kunin V."/>
            <person name="Anderson I."/>
            <person name="Lapidus A."/>
            <person name="Goltsman E."/>
            <person name="Barry K."/>
            <person name="Koonin E.V."/>
            <person name="Hugenholtz P."/>
            <person name="Kyrpides N."/>
            <person name="Wanner G."/>
            <person name="Richardson P."/>
            <person name="Keller M."/>
            <person name="Stetter K.O."/>
        </authorList>
    </citation>
    <scope>NUCLEOTIDE SEQUENCE [LARGE SCALE GENOMIC DNA]</scope>
    <source>
        <strain>OPF8</strain>
    </source>
</reference>
<name>RS4E_KORCO</name>
<keyword id="KW-1185">Reference proteome</keyword>
<keyword id="KW-0687">Ribonucleoprotein</keyword>
<keyword id="KW-0689">Ribosomal protein</keyword>
<keyword id="KW-0694">RNA-binding</keyword>
<keyword id="KW-0699">rRNA-binding</keyword>
<feature type="chain" id="PRO_1000206436" description="Small ribosomal subunit protein eS4">
    <location>
        <begin position="1"/>
        <end position="235"/>
    </location>
</feature>
<feature type="domain" description="S4 RNA-binding" evidence="1">
    <location>
        <begin position="43"/>
        <end position="114"/>
    </location>
</feature>
<comment type="similarity">
    <text evidence="1">Belongs to the eukaryotic ribosomal protein eS4 family.</text>
</comment>
<accession>B1L778</accession>
<proteinExistence type="inferred from homology"/>
<evidence type="ECO:0000255" key="1">
    <source>
        <dbReference type="HAMAP-Rule" id="MF_00485"/>
    </source>
</evidence>
<evidence type="ECO:0000305" key="2"/>
<organism>
    <name type="scientific">Korarchaeum cryptofilum (strain OPF8)</name>
    <dbReference type="NCBI Taxonomy" id="374847"/>
    <lineage>
        <taxon>Archaea</taxon>
        <taxon>Thermoproteota</taxon>
        <taxon>Candidatus Korarchaeia</taxon>
        <taxon>Candidatus Korarchaeales</taxon>
        <taxon>Candidatus Korarchaeaceae</taxon>
        <taxon>Candidatus Korarchaeum</taxon>
    </lineage>
</organism>
<sequence>MGKMGGSRHLKSLAAPGYYPIAKRERVWVVKPSPGPHAIDEGIPLLLIVRDMLKLATTAREARRIISMKKILVDGKPRYDYKFQVGLMDVISIPEIGVNYRMVPDPHRFLRLIEIPQSESKMKLVKVIGKRTIRGGRIQLTSHDGRNFLLDGRDVKPGDSLLIELPSQSVIDHLRFDTGSSVLVTRGRMAGRIGRVEGIGTIIEMRDLENPELSYRGVKENLIVVGKERPVLKLR</sequence>
<gene>
    <name evidence="1" type="primary">rps4e</name>
    <name type="ordered locus">Kcr_1562</name>
</gene>
<protein>
    <recommendedName>
        <fullName evidence="1">Small ribosomal subunit protein eS4</fullName>
    </recommendedName>
    <alternativeName>
        <fullName evidence="2">30S ribosomal protein S4e</fullName>
    </alternativeName>
</protein>
<dbReference type="EMBL" id="CP000968">
    <property type="protein sequence ID" value="ACB08307.1"/>
    <property type="molecule type" value="Genomic_DNA"/>
</dbReference>
<dbReference type="RefSeq" id="WP_012310204.1">
    <property type="nucleotide sequence ID" value="NC_010482.1"/>
</dbReference>
<dbReference type="SMR" id="B1L778"/>
<dbReference type="FunCoup" id="B1L778">
    <property type="interactions" value="138"/>
</dbReference>
<dbReference type="STRING" id="374847.Kcr_1562"/>
<dbReference type="EnsemblBacteria" id="ACB08307">
    <property type="protein sequence ID" value="ACB08307"/>
    <property type="gene ID" value="Kcr_1562"/>
</dbReference>
<dbReference type="GeneID" id="6094838"/>
<dbReference type="KEGG" id="kcr:Kcr_1562"/>
<dbReference type="eggNOG" id="arCOG04093">
    <property type="taxonomic scope" value="Archaea"/>
</dbReference>
<dbReference type="HOGENOM" id="CLU_060400_0_0_2"/>
<dbReference type="InParanoid" id="B1L778"/>
<dbReference type="OrthoDB" id="372073at2157"/>
<dbReference type="PhylomeDB" id="B1L778"/>
<dbReference type="Proteomes" id="UP000001686">
    <property type="component" value="Chromosome"/>
</dbReference>
<dbReference type="GO" id="GO:0022627">
    <property type="term" value="C:cytosolic small ribosomal subunit"/>
    <property type="evidence" value="ECO:0000318"/>
    <property type="project" value="GO_Central"/>
</dbReference>
<dbReference type="GO" id="GO:0003723">
    <property type="term" value="F:RNA binding"/>
    <property type="evidence" value="ECO:0000318"/>
    <property type="project" value="GO_Central"/>
</dbReference>
<dbReference type="GO" id="GO:0019843">
    <property type="term" value="F:rRNA binding"/>
    <property type="evidence" value="ECO:0007669"/>
    <property type="project" value="UniProtKB-KW"/>
</dbReference>
<dbReference type="GO" id="GO:0003735">
    <property type="term" value="F:structural constituent of ribosome"/>
    <property type="evidence" value="ECO:0000318"/>
    <property type="project" value="GO_Central"/>
</dbReference>
<dbReference type="GO" id="GO:0006412">
    <property type="term" value="P:translation"/>
    <property type="evidence" value="ECO:0000318"/>
    <property type="project" value="GO_Central"/>
</dbReference>
<dbReference type="CDD" id="cd00165">
    <property type="entry name" value="S4"/>
    <property type="match status" value="1"/>
</dbReference>
<dbReference type="FunFam" id="3.10.290.10:FF:000002">
    <property type="entry name" value="40S ribosomal protein S4"/>
    <property type="match status" value="1"/>
</dbReference>
<dbReference type="Gene3D" id="2.40.50.740">
    <property type="match status" value="1"/>
</dbReference>
<dbReference type="Gene3D" id="3.10.290.10">
    <property type="entry name" value="RNA-binding S4 domain"/>
    <property type="match status" value="1"/>
</dbReference>
<dbReference type="HAMAP" id="MF_00485">
    <property type="entry name" value="Ribosomal_eS4"/>
    <property type="match status" value="1"/>
</dbReference>
<dbReference type="InterPro" id="IPR000876">
    <property type="entry name" value="Ribosomal_eS4"/>
</dbReference>
<dbReference type="InterPro" id="IPR013845">
    <property type="entry name" value="Ribosomal_eS4_central_region"/>
</dbReference>
<dbReference type="InterPro" id="IPR038237">
    <property type="entry name" value="Ribosomal_eS4_central_sf"/>
</dbReference>
<dbReference type="InterPro" id="IPR013843">
    <property type="entry name" value="Ribosomal_eS4_N"/>
</dbReference>
<dbReference type="InterPro" id="IPR002942">
    <property type="entry name" value="S4_RNA-bd"/>
</dbReference>
<dbReference type="InterPro" id="IPR036986">
    <property type="entry name" value="S4_RNA-bd_sf"/>
</dbReference>
<dbReference type="NCBIfam" id="NF003312">
    <property type="entry name" value="PRK04313.1"/>
    <property type="match status" value="1"/>
</dbReference>
<dbReference type="PANTHER" id="PTHR11581">
    <property type="entry name" value="30S/40S RIBOSOMAL PROTEIN S4"/>
    <property type="match status" value="1"/>
</dbReference>
<dbReference type="PANTHER" id="PTHR11581:SF0">
    <property type="entry name" value="SMALL RIBOSOMAL SUBUNIT PROTEIN ES4"/>
    <property type="match status" value="1"/>
</dbReference>
<dbReference type="Pfam" id="PF00900">
    <property type="entry name" value="Ribosomal_S4e"/>
    <property type="match status" value="1"/>
</dbReference>
<dbReference type="Pfam" id="PF08071">
    <property type="entry name" value="RS4NT"/>
    <property type="match status" value="1"/>
</dbReference>
<dbReference type="Pfam" id="PF01479">
    <property type="entry name" value="S4"/>
    <property type="match status" value="1"/>
</dbReference>
<dbReference type="PIRSF" id="PIRSF002116">
    <property type="entry name" value="Ribosomal_S4"/>
    <property type="match status" value="1"/>
</dbReference>
<dbReference type="SMART" id="SM00363">
    <property type="entry name" value="S4"/>
    <property type="match status" value="1"/>
</dbReference>
<dbReference type="SUPFAM" id="SSF55174">
    <property type="entry name" value="Alpha-L RNA-binding motif"/>
    <property type="match status" value="1"/>
</dbReference>
<dbReference type="PROSITE" id="PS50889">
    <property type="entry name" value="S4"/>
    <property type="match status" value="1"/>
</dbReference>